<accession>P08064</accession>
<dbReference type="EMBL" id="M13470">
    <property type="protein sequence ID" value="AAA22745.1"/>
    <property type="molecule type" value="Genomic_DNA"/>
</dbReference>
<dbReference type="EMBL" id="Z75208">
    <property type="protein sequence ID" value="CAA99546.1"/>
    <property type="molecule type" value="Genomic_DNA"/>
</dbReference>
<dbReference type="EMBL" id="AL009126">
    <property type="protein sequence ID" value="CAB14805.1"/>
    <property type="molecule type" value="Genomic_DNA"/>
</dbReference>
<dbReference type="EMBL" id="M16753">
    <property type="protein sequence ID" value="AAA22749.1"/>
    <property type="molecule type" value="Genomic_DNA"/>
</dbReference>
<dbReference type="PIR" id="A29843">
    <property type="entry name" value="DEBSSC"/>
</dbReference>
<dbReference type="RefSeq" id="NP_390723.1">
    <property type="nucleotide sequence ID" value="NC_000964.3"/>
</dbReference>
<dbReference type="RefSeq" id="WP_003222512.1">
    <property type="nucleotide sequence ID" value="NZ_OZ025638.1"/>
</dbReference>
<dbReference type="SMR" id="P08064"/>
<dbReference type="FunCoup" id="P08064">
    <property type="interactions" value="155"/>
</dbReference>
<dbReference type="STRING" id="224308.BSU28450"/>
<dbReference type="PaxDb" id="224308-BSU28450"/>
<dbReference type="EnsemblBacteria" id="CAB14805">
    <property type="protein sequence ID" value="CAB14805"/>
    <property type="gene ID" value="BSU_28450"/>
</dbReference>
<dbReference type="GeneID" id="86872641"/>
<dbReference type="GeneID" id="937458"/>
<dbReference type="KEGG" id="bsu:BSU28450"/>
<dbReference type="PATRIC" id="fig|224308.179.peg.3090"/>
<dbReference type="eggNOG" id="COG2009">
    <property type="taxonomic scope" value="Bacteria"/>
</dbReference>
<dbReference type="InParanoid" id="P08064"/>
<dbReference type="OrthoDB" id="9789209at2"/>
<dbReference type="PhylomeDB" id="P08064"/>
<dbReference type="BioCyc" id="BSUB:BSU28450-MONOMER"/>
<dbReference type="BioCyc" id="MetaCyc:BSU28450-MONOMER"/>
<dbReference type="UniPathway" id="UPA00223"/>
<dbReference type="PRO" id="PR:P08064"/>
<dbReference type="Proteomes" id="UP000001570">
    <property type="component" value="Chromosome"/>
</dbReference>
<dbReference type="GO" id="GO:0005886">
    <property type="term" value="C:plasma membrane"/>
    <property type="evidence" value="ECO:0007669"/>
    <property type="project" value="UniProtKB-SubCell"/>
</dbReference>
<dbReference type="GO" id="GO:0046872">
    <property type="term" value="F:metal ion binding"/>
    <property type="evidence" value="ECO:0007669"/>
    <property type="project" value="UniProtKB-KW"/>
</dbReference>
<dbReference type="GO" id="GO:0006099">
    <property type="term" value="P:tricarboxylic acid cycle"/>
    <property type="evidence" value="ECO:0007669"/>
    <property type="project" value="UniProtKB-UniPathway"/>
</dbReference>
<dbReference type="CDD" id="cd03497">
    <property type="entry name" value="SQR_TypeB_1_TM"/>
    <property type="match status" value="1"/>
</dbReference>
<dbReference type="Gene3D" id="1.20.1300.10">
    <property type="entry name" value="Fumarate reductase/succinate dehydrogenase, transmembrane subunit"/>
    <property type="match status" value="1"/>
</dbReference>
<dbReference type="InterPro" id="IPR011138">
    <property type="entry name" value="Cytochrome_b-558"/>
</dbReference>
<dbReference type="InterPro" id="IPR034804">
    <property type="entry name" value="SQR/QFR_C/D"/>
</dbReference>
<dbReference type="InterPro" id="IPR016002">
    <property type="entry name" value="Succ_DH_cyt_b558_Firmicute"/>
</dbReference>
<dbReference type="InterPro" id="IPR000701">
    <property type="entry name" value="SuccDH_FuR_B_TM-su"/>
</dbReference>
<dbReference type="NCBIfam" id="TIGR02046">
    <property type="entry name" value="sdhC_b558_fam"/>
    <property type="match status" value="1"/>
</dbReference>
<dbReference type="Pfam" id="PF01127">
    <property type="entry name" value="Sdh_cyt"/>
    <property type="match status" value="1"/>
</dbReference>
<dbReference type="PIRSF" id="PIRSF000170">
    <property type="entry name" value="Succ_dh_cyt_b558"/>
    <property type="match status" value="1"/>
</dbReference>
<dbReference type="SUPFAM" id="SSF81343">
    <property type="entry name" value="Fumarate reductase respiratory complex transmembrane subunits"/>
    <property type="match status" value="1"/>
</dbReference>
<sequence>MSGNREFYFRRLHSLLGVIPVGIFLIQHLVVNQFAARGAEAFNSAAHFMDSLPFRYALEIFIIFLPLIYHAVYGVYIAFTAKNNAGQYSYMRNWLFVLQRVTGIITLIFVSWHVWETRIAAQMGAEVNFDMMANILSSPAMLGFYIVGVLSTIFHFSNGLWSFAVTWGITVTPRSQRISTYVTLIIFVALSYVGLKAIFAFV</sequence>
<name>DHSC_BACSU</name>
<gene>
    <name type="primary">sdhC</name>
    <name type="ordered locus">BSU28450</name>
</gene>
<feature type="chain" id="PRO_0000199876" description="Succinate dehydrogenase cytochrome b558 subunit">
    <location>
        <begin position="1"/>
        <end position="202"/>
    </location>
</feature>
<feature type="transmembrane region" description="Helical" evidence="1">
    <location>
        <begin position="12"/>
        <end position="31"/>
    </location>
</feature>
<feature type="transmembrane region" description="Helical" evidence="1">
    <location>
        <begin position="60"/>
        <end position="79"/>
    </location>
</feature>
<feature type="transmembrane region" description="Helical" evidence="1">
    <location>
        <begin position="93"/>
        <end position="113"/>
    </location>
</feature>
<feature type="transmembrane region" description="Helical" evidence="1">
    <location>
        <begin position="135"/>
        <end position="155"/>
    </location>
</feature>
<feature type="transmembrane region" description="Helical" evidence="1">
    <location>
        <begin position="178"/>
        <end position="196"/>
    </location>
</feature>
<feature type="binding site" description="axial binding residue" evidence="2">
    <location>
        <position position="28"/>
    </location>
    <ligand>
        <name>heme</name>
        <dbReference type="ChEBI" id="CHEBI:30413"/>
    </ligand>
    <ligandPart>
        <name>Fe</name>
        <dbReference type="ChEBI" id="CHEBI:18248"/>
    </ligandPart>
</feature>
<feature type="binding site" description="axial binding residue" evidence="2">
    <location>
        <position position="70"/>
    </location>
    <ligand>
        <name>heme</name>
        <dbReference type="ChEBI" id="CHEBI:30413"/>
    </ligand>
    <ligandPart>
        <name>Fe</name>
        <dbReference type="ChEBI" id="CHEBI:18248"/>
    </ligandPart>
</feature>
<feature type="binding site" description="axial binding residue" evidence="1">
    <location>
        <position position="113"/>
    </location>
    <ligand>
        <name>heme</name>
        <dbReference type="ChEBI" id="CHEBI:30413"/>
    </ligand>
    <ligandPart>
        <name>Fe</name>
        <dbReference type="ChEBI" id="CHEBI:18248"/>
    </ligandPart>
</feature>
<feature type="binding site" description="axial binding residue" evidence="2">
    <location>
        <position position="155"/>
    </location>
    <ligand>
        <name>heme</name>
        <dbReference type="ChEBI" id="CHEBI:30413"/>
    </ligand>
    <ligandPart>
        <name>Fe</name>
        <dbReference type="ChEBI" id="CHEBI:18248"/>
    </ligandPart>
</feature>
<organism>
    <name type="scientific">Bacillus subtilis (strain 168)</name>
    <dbReference type="NCBI Taxonomy" id="224308"/>
    <lineage>
        <taxon>Bacteria</taxon>
        <taxon>Bacillati</taxon>
        <taxon>Bacillota</taxon>
        <taxon>Bacilli</taxon>
        <taxon>Bacillales</taxon>
        <taxon>Bacillaceae</taxon>
        <taxon>Bacillus</taxon>
    </lineage>
</organism>
<reference key="1">
    <citation type="journal article" date="1986" name="J. Bacteriol.">
        <title>Nucleotide sequence of the gene for cytochrome b558 of the Bacillus subtilis succinate dehydrogenase complex.</title>
        <authorList>
            <person name="Magnusson K."/>
            <person name="Philips M.K."/>
            <person name="Guest J.R."/>
            <person name="Rutberg L."/>
        </authorList>
    </citation>
    <scope>NUCLEOTIDE SEQUENCE [GENOMIC DNA]</scope>
    <source>
        <strain>168 / PY79</strain>
    </source>
</reference>
<reference key="2">
    <citation type="journal article" date="1996" name="Microbiology">
        <title>The dnaB-pheA (256 degrees-240 degrees) region of the Bacillus subtilis chromosome containing genes responsible for stress responses, the utilization of plant cell walls and primary metabolism.</title>
        <authorList>
            <person name="Wipat A."/>
            <person name="Carter N."/>
            <person name="Brignell C.S."/>
            <person name="Guy J.B."/>
            <person name="Piper K."/>
            <person name="Sanders J."/>
            <person name="Emmerson P.T."/>
            <person name="Harwood C.R."/>
        </authorList>
    </citation>
    <scope>NUCLEOTIDE SEQUENCE [GENOMIC DNA]</scope>
    <source>
        <strain>168</strain>
    </source>
</reference>
<reference key="3">
    <citation type="journal article" date="1997" name="Nature">
        <title>The complete genome sequence of the Gram-positive bacterium Bacillus subtilis.</title>
        <authorList>
            <person name="Kunst F."/>
            <person name="Ogasawara N."/>
            <person name="Moszer I."/>
            <person name="Albertini A.M."/>
            <person name="Alloni G."/>
            <person name="Azevedo V."/>
            <person name="Bertero M.G."/>
            <person name="Bessieres P."/>
            <person name="Bolotin A."/>
            <person name="Borchert S."/>
            <person name="Borriss R."/>
            <person name="Boursier L."/>
            <person name="Brans A."/>
            <person name="Braun M."/>
            <person name="Brignell S.C."/>
            <person name="Bron S."/>
            <person name="Brouillet S."/>
            <person name="Bruschi C.V."/>
            <person name="Caldwell B."/>
            <person name="Capuano V."/>
            <person name="Carter N.M."/>
            <person name="Choi S.-K."/>
            <person name="Codani J.-J."/>
            <person name="Connerton I.F."/>
            <person name="Cummings N.J."/>
            <person name="Daniel R.A."/>
            <person name="Denizot F."/>
            <person name="Devine K.M."/>
            <person name="Duesterhoeft A."/>
            <person name="Ehrlich S.D."/>
            <person name="Emmerson P.T."/>
            <person name="Entian K.-D."/>
            <person name="Errington J."/>
            <person name="Fabret C."/>
            <person name="Ferrari E."/>
            <person name="Foulger D."/>
            <person name="Fritz C."/>
            <person name="Fujita M."/>
            <person name="Fujita Y."/>
            <person name="Fuma S."/>
            <person name="Galizzi A."/>
            <person name="Galleron N."/>
            <person name="Ghim S.-Y."/>
            <person name="Glaser P."/>
            <person name="Goffeau A."/>
            <person name="Golightly E.J."/>
            <person name="Grandi G."/>
            <person name="Guiseppi G."/>
            <person name="Guy B.J."/>
            <person name="Haga K."/>
            <person name="Haiech J."/>
            <person name="Harwood C.R."/>
            <person name="Henaut A."/>
            <person name="Hilbert H."/>
            <person name="Holsappel S."/>
            <person name="Hosono S."/>
            <person name="Hullo M.-F."/>
            <person name="Itaya M."/>
            <person name="Jones L.-M."/>
            <person name="Joris B."/>
            <person name="Karamata D."/>
            <person name="Kasahara Y."/>
            <person name="Klaerr-Blanchard M."/>
            <person name="Klein C."/>
            <person name="Kobayashi Y."/>
            <person name="Koetter P."/>
            <person name="Koningstein G."/>
            <person name="Krogh S."/>
            <person name="Kumano M."/>
            <person name="Kurita K."/>
            <person name="Lapidus A."/>
            <person name="Lardinois S."/>
            <person name="Lauber J."/>
            <person name="Lazarevic V."/>
            <person name="Lee S.-M."/>
            <person name="Levine A."/>
            <person name="Liu H."/>
            <person name="Masuda S."/>
            <person name="Mauel C."/>
            <person name="Medigue C."/>
            <person name="Medina N."/>
            <person name="Mellado R.P."/>
            <person name="Mizuno M."/>
            <person name="Moestl D."/>
            <person name="Nakai S."/>
            <person name="Noback M."/>
            <person name="Noone D."/>
            <person name="O'Reilly M."/>
            <person name="Ogawa K."/>
            <person name="Ogiwara A."/>
            <person name="Oudega B."/>
            <person name="Park S.-H."/>
            <person name="Parro V."/>
            <person name="Pohl T.M."/>
            <person name="Portetelle D."/>
            <person name="Porwollik S."/>
            <person name="Prescott A.M."/>
            <person name="Presecan E."/>
            <person name="Pujic P."/>
            <person name="Purnelle B."/>
            <person name="Rapoport G."/>
            <person name="Rey M."/>
            <person name="Reynolds S."/>
            <person name="Rieger M."/>
            <person name="Rivolta C."/>
            <person name="Rocha E."/>
            <person name="Roche B."/>
            <person name="Rose M."/>
            <person name="Sadaie Y."/>
            <person name="Sato T."/>
            <person name="Scanlan E."/>
            <person name="Schleich S."/>
            <person name="Schroeter R."/>
            <person name="Scoffone F."/>
            <person name="Sekiguchi J."/>
            <person name="Sekowska A."/>
            <person name="Seror S.J."/>
            <person name="Serror P."/>
            <person name="Shin B.-S."/>
            <person name="Soldo B."/>
            <person name="Sorokin A."/>
            <person name="Tacconi E."/>
            <person name="Takagi T."/>
            <person name="Takahashi H."/>
            <person name="Takemaru K."/>
            <person name="Takeuchi M."/>
            <person name="Tamakoshi A."/>
            <person name="Tanaka T."/>
            <person name="Terpstra P."/>
            <person name="Tognoni A."/>
            <person name="Tosato V."/>
            <person name="Uchiyama S."/>
            <person name="Vandenbol M."/>
            <person name="Vannier F."/>
            <person name="Vassarotti A."/>
            <person name="Viari A."/>
            <person name="Wambutt R."/>
            <person name="Wedler E."/>
            <person name="Wedler H."/>
            <person name="Weitzenegger T."/>
            <person name="Winters P."/>
            <person name="Wipat A."/>
            <person name="Yamamoto H."/>
            <person name="Yamane K."/>
            <person name="Yasumoto K."/>
            <person name="Yata K."/>
            <person name="Yoshida K."/>
            <person name="Yoshikawa H.-F."/>
            <person name="Zumstein E."/>
            <person name="Yoshikawa H."/>
            <person name="Danchin A."/>
        </authorList>
    </citation>
    <scope>NUCLEOTIDE SEQUENCE [LARGE SCALE GENOMIC DNA]</scope>
    <source>
        <strain>168</strain>
    </source>
</reference>
<reference key="4">
    <citation type="journal article" date="1987" name="J. Bacteriol.">
        <title>Nucleotide sequence encoding the flavoprotein and iron-sulfur protein subunits of the Bacillus subtilis PY79 succinate dehydrogenase complex.</title>
        <authorList>
            <person name="Phillips M.K."/>
            <person name="Hederstedt L."/>
            <person name="Hasnain S."/>
            <person name="Rutberg L."/>
            <person name="Guest J.R."/>
        </authorList>
    </citation>
    <scope>NUCLEOTIDE SEQUENCE [GENOMIC DNA] OF 180-202</scope>
    <source>
        <strain>168 / PY79</strain>
    </source>
</reference>
<reference key="5">
    <citation type="journal article" date="1987" name="J. Bacteriol.">
        <title>Identification of the promoter of the Bacillus subtilis sdh operon.</title>
        <authorList>
            <person name="Melin L."/>
            <person name="Magnusson K."/>
            <person name="Rutberg L."/>
        </authorList>
    </citation>
    <scope>NUCLEOTIDE SEQUENCE [GENOMIC DNA] OF 1-13</scope>
</reference>
<reference key="6">
    <citation type="journal article" date="1990" name="Mol. Microbiol.">
        <title>Role of His residues in Bacillus subtilis cytochrome b558 for haem binding and assembly of succinate: quinone oxidoreductase (complex II).</title>
        <authorList>
            <person name="Friden H."/>
            <person name="Hederstedt L."/>
        </authorList>
    </citation>
    <scope>TOPOLOGY</scope>
    <scope>HEME-BINDING</scope>
</reference>
<proteinExistence type="evidence at protein level"/>
<evidence type="ECO:0000255" key="1"/>
<evidence type="ECO:0000305" key="2"/>
<keyword id="KW-1003">Cell membrane</keyword>
<keyword id="KW-0249">Electron transport</keyword>
<keyword id="KW-0349">Heme</keyword>
<keyword id="KW-0408">Iron</keyword>
<keyword id="KW-0472">Membrane</keyword>
<keyword id="KW-0479">Metal-binding</keyword>
<keyword id="KW-1185">Reference proteome</keyword>
<keyword id="KW-0812">Transmembrane</keyword>
<keyword id="KW-1133">Transmembrane helix</keyword>
<keyword id="KW-0813">Transport</keyword>
<keyword id="KW-0816">Tricarboxylic acid cycle</keyword>
<protein>
    <recommendedName>
        <fullName>Succinate dehydrogenase cytochrome b558 subunit</fullName>
        <shortName>Cytochrome b-558</shortName>
    </recommendedName>
</protein>
<comment type="function">
    <text>Di-heme cytochrome of the succinate dehydrogenase complex.</text>
</comment>
<comment type="biophysicochemical properties">
    <redoxPotential>
        <text>E(0) is +65 mV.</text>
    </redoxPotential>
</comment>
<comment type="pathway">
    <text>Carbohydrate metabolism; tricarboxylic acid cycle.</text>
</comment>
<comment type="subunit">
    <text>Part of an enzyme complex containing three subunits: a flavoprotein, an iron-sulfur protein and cytochrome b-558.</text>
</comment>
<comment type="subcellular location">
    <subcellularLocation>
        <location evidence="2">Cell membrane</location>
        <topology evidence="2">Multi-pass membrane protein</topology>
    </subcellularLocation>
</comment>
<comment type="similarity">
    <text evidence="2">Belongs to the cytochrome b558 family.</text>
</comment>